<comment type="subcellular location">
    <subcellularLocation>
        <location evidence="3">Membrane</location>
        <topology evidence="3">Multi-pass membrane protein</topology>
    </subcellularLocation>
</comment>
<comment type="similarity">
    <text evidence="3">Belongs to the ST7 family.</text>
</comment>
<reference key="1">
    <citation type="submission" date="2006-09" db="EMBL/GenBank/DDBJ databases">
        <title>NISC comparative sequencing initiative.</title>
        <authorList>
            <person name="Antonellis A."/>
            <person name="Ayele K."/>
            <person name="Benjamin B."/>
            <person name="Blakesley R.W."/>
            <person name="Boakye A."/>
            <person name="Bouffard G.G."/>
            <person name="Brinkley C."/>
            <person name="Brooks S."/>
            <person name="Chu G."/>
            <person name="Coleman H."/>
            <person name="Engle J."/>
            <person name="Gestole M."/>
            <person name="Greene A."/>
            <person name="Guan X."/>
            <person name="Gupta J."/>
            <person name="Haghighi P."/>
            <person name="Han J."/>
            <person name="Hansen N."/>
            <person name="Ho S.-L."/>
            <person name="Hu P."/>
            <person name="Hunter G."/>
            <person name="Hurle B."/>
            <person name="Idol J.R."/>
            <person name="Kwong P."/>
            <person name="Laric P."/>
            <person name="Larson S."/>
            <person name="Lee-Lin S.-Q."/>
            <person name="Legaspi R."/>
            <person name="Madden M."/>
            <person name="Maduro Q.L."/>
            <person name="Maduro V.B."/>
            <person name="Margulies E.H."/>
            <person name="Masiello C."/>
            <person name="Maskeri B."/>
            <person name="McDowell J."/>
            <person name="Mojidi H.A."/>
            <person name="Mullikin J.C."/>
            <person name="Oestreicher J.S."/>
            <person name="Park M."/>
            <person name="Portnoy M.E."/>
            <person name="Prasad A."/>
            <person name="Puri O."/>
            <person name="Reddix-Dugue N."/>
            <person name="Schandler K."/>
            <person name="Schueler M.G."/>
            <person name="Sison C."/>
            <person name="Stantripop S."/>
            <person name="Stephen E."/>
            <person name="Taye A."/>
            <person name="Thomas J.W."/>
            <person name="Thomas P.J."/>
            <person name="Tsipouri V."/>
            <person name="Ung L."/>
            <person name="Vogt J.L."/>
            <person name="Wetherby K.D."/>
            <person name="Young A."/>
            <person name="Green E.D."/>
        </authorList>
    </citation>
    <scope>NUCLEOTIDE SEQUENCE [LARGE SCALE GENOMIC DNA]</scope>
</reference>
<name>ST7_RABIT</name>
<organism>
    <name type="scientific">Oryctolagus cuniculus</name>
    <name type="common">Rabbit</name>
    <dbReference type="NCBI Taxonomy" id="9986"/>
    <lineage>
        <taxon>Eukaryota</taxon>
        <taxon>Metazoa</taxon>
        <taxon>Chordata</taxon>
        <taxon>Craniata</taxon>
        <taxon>Vertebrata</taxon>
        <taxon>Euteleostomi</taxon>
        <taxon>Mammalia</taxon>
        <taxon>Eutheria</taxon>
        <taxon>Euarchontoglires</taxon>
        <taxon>Glires</taxon>
        <taxon>Lagomorpha</taxon>
        <taxon>Leporidae</taxon>
        <taxon>Oryctolagus</taxon>
    </lineage>
</organism>
<evidence type="ECO:0000250" key="1">
    <source>
        <dbReference type="UniProtKB" id="Q9NRC1"/>
    </source>
</evidence>
<evidence type="ECO:0000255" key="2"/>
<evidence type="ECO:0000305" key="3"/>
<keyword id="KW-0325">Glycoprotein</keyword>
<keyword id="KW-0472">Membrane</keyword>
<keyword id="KW-0597">Phosphoprotein</keyword>
<keyword id="KW-1185">Reference proteome</keyword>
<keyword id="KW-0812">Transmembrane</keyword>
<keyword id="KW-1133">Transmembrane helix</keyword>
<proteinExistence type="inferred from homology"/>
<dbReference type="EMBL" id="DP000006">
    <property type="protein sequence ID" value="AAY89015.1"/>
    <property type="molecule type" value="Genomic_DNA"/>
</dbReference>
<dbReference type="RefSeq" id="NP_001103838.1">
    <property type="nucleotide sequence ID" value="NM_001110368.1"/>
</dbReference>
<dbReference type="FunCoup" id="Q09YN2">
    <property type="interactions" value="739"/>
</dbReference>
<dbReference type="STRING" id="9986.ENSOCUP00000048654"/>
<dbReference type="GlyCosmos" id="Q09YN2">
    <property type="glycosylation" value="1 site, No reported glycans"/>
</dbReference>
<dbReference type="PaxDb" id="9986-ENSOCUP00000022611"/>
<dbReference type="GeneID" id="100126567"/>
<dbReference type="KEGG" id="ocu:100126567"/>
<dbReference type="CTD" id="7982"/>
<dbReference type="eggNOG" id="KOG3807">
    <property type="taxonomic scope" value="Eukaryota"/>
</dbReference>
<dbReference type="InParanoid" id="Q09YN2"/>
<dbReference type="OrthoDB" id="5914722at2759"/>
<dbReference type="Proteomes" id="UP000001811">
    <property type="component" value="Unplaced"/>
</dbReference>
<dbReference type="GO" id="GO:0016020">
    <property type="term" value="C:membrane"/>
    <property type="evidence" value="ECO:0007669"/>
    <property type="project" value="UniProtKB-SubCell"/>
</dbReference>
<dbReference type="CDD" id="cd11557">
    <property type="entry name" value="ST7"/>
    <property type="match status" value="1"/>
</dbReference>
<dbReference type="InterPro" id="IPR007311">
    <property type="entry name" value="ST7"/>
</dbReference>
<dbReference type="PANTHER" id="PTHR12745">
    <property type="entry name" value="SUPPRESSION OF TUMORIGENICITY 7"/>
    <property type="match status" value="1"/>
</dbReference>
<dbReference type="PANTHER" id="PTHR12745:SF10">
    <property type="entry name" value="SUPPRESSOR OF TUMORIGENICITY 7 PROTEIN"/>
    <property type="match status" value="1"/>
</dbReference>
<dbReference type="Pfam" id="PF04184">
    <property type="entry name" value="ST7"/>
    <property type="match status" value="1"/>
</dbReference>
<accession>Q09YN2</accession>
<gene>
    <name type="primary">ST7</name>
</gene>
<protein>
    <recommendedName>
        <fullName>Suppressor of tumorigenicity 7 protein</fullName>
    </recommendedName>
</protein>
<sequence>MAEAATGFLEQLKSCIVWSWTYLWTVWFFIVLFLVYILRVPLKINDNLSTVSMFLNTLTPKFYVALTGTSSLISGLILIFEWWYFRKYGTSFIEQVSVSHLRPLLGGVDNNSSNNSNSSNGDSDSNRQSVSECKVWRNPLNLFRGAEYNRYTWVTGREPLTYYDMNLSAQDHQTFFTCDSDHLRPADAIMQKAWRERNPQARISAAHEALEINEIRSRVEVPLIASSTIWEIKLLPKCATAYILLAEEEATTIAEAEKLFKQALKAGDGCYRRSQQLQHHGSQYEAQHRRDTNVLVYIKRRLAMCARRLGRTREAVKMMRDLMKEFPLLSMFNIHENLLEALLELQAYADVQAVLAKYDDISLPKSATICYTAALLKARAVSDKFSPEAASRRGLSTAEMNAVEAIHRAVEFNPHVPKYLLEMKSLILPPEHILKRGDSEAIAYAFFHLAHWKRVEGALNLLHCTWEGTFRMIPYPLEKGHLFYPYPICTETADRELLPSFHEVSVYPKKELPFFILFTAGLCSFTAMLALLTHQFPELMGVFAKAMIDIFCSAEFRDWNCESIFMRVEDDLEMPPAPQSQHFQK</sequence>
<feature type="chain" id="PRO_0000339214" description="Suppressor of tumorigenicity 7 protein">
    <location>
        <begin position="1"/>
        <end position="585"/>
    </location>
</feature>
<feature type="transmembrane region" description="Helical" evidence="2">
    <location>
        <begin position="15"/>
        <end position="35"/>
    </location>
</feature>
<feature type="transmembrane region" description="Helical" evidence="2">
    <location>
        <begin position="62"/>
        <end position="82"/>
    </location>
</feature>
<feature type="transmembrane region" description="Helical" evidence="2">
    <location>
        <begin position="512"/>
        <end position="532"/>
    </location>
</feature>
<feature type="modified residue" description="Phosphoserine" evidence="1">
    <location>
        <position position="386"/>
    </location>
</feature>
<feature type="glycosylation site" description="N-linked (GlcNAc...) asparagine" evidence="2">
    <location>
        <position position="47"/>
    </location>
</feature>